<evidence type="ECO:0000255" key="1">
    <source>
        <dbReference type="HAMAP-Rule" id="MF_00238"/>
    </source>
</evidence>
<dbReference type="EC" id="2.7.4.25" evidence="1"/>
<dbReference type="EMBL" id="AE017220">
    <property type="protein sequence ID" value="AAX64840.1"/>
    <property type="molecule type" value="Genomic_DNA"/>
</dbReference>
<dbReference type="RefSeq" id="WP_001539605.1">
    <property type="nucleotide sequence ID" value="NC_006905.1"/>
</dbReference>
<dbReference type="SMR" id="Q57R21"/>
<dbReference type="KEGG" id="sec:SCH_0934"/>
<dbReference type="HOGENOM" id="CLU_079959_0_2_6"/>
<dbReference type="Proteomes" id="UP000000538">
    <property type="component" value="Chromosome"/>
</dbReference>
<dbReference type="GO" id="GO:0005829">
    <property type="term" value="C:cytosol"/>
    <property type="evidence" value="ECO:0007669"/>
    <property type="project" value="TreeGrafter"/>
</dbReference>
<dbReference type="GO" id="GO:0005524">
    <property type="term" value="F:ATP binding"/>
    <property type="evidence" value="ECO:0007669"/>
    <property type="project" value="UniProtKB-UniRule"/>
</dbReference>
<dbReference type="GO" id="GO:0036430">
    <property type="term" value="F:CMP kinase activity"/>
    <property type="evidence" value="ECO:0007669"/>
    <property type="project" value="RHEA"/>
</dbReference>
<dbReference type="GO" id="GO:0036431">
    <property type="term" value="F:dCMP kinase activity"/>
    <property type="evidence" value="ECO:0007669"/>
    <property type="project" value="RHEA"/>
</dbReference>
<dbReference type="GO" id="GO:0015949">
    <property type="term" value="P:nucleobase-containing small molecule interconversion"/>
    <property type="evidence" value="ECO:0007669"/>
    <property type="project" value="TreeGrafter"/>
</dbReference>
<dbReference type="GO" id="GO:0006220">
    <property type="term" value="P:pyrimidine nucleotide metabolic process"/>
    <property type="evidence" value="ECO:0007669"/>
    <property type="project" value="UniProtKB-UniRule"/>
</dbReference>
<dbReference type="CDD" id="cd02020">
    <property type="entry name" value="CMPK"/>
    <property type="match status" value="1"/>
</dbReference>
<dbReference type="FunFam" id="3.40.50.300:FF:000262">
    <property type="entry name" value="Cytidylate kinase"/>
    <property type="match status" value="1"/>
</dbReference>
<dbReference type="Gene3D" id="3.40.50.300">
    <property type="entry name" value="P-loop containing nucleotide triphosphate hydrolases"/>
    <property type="match status" value="1"/>
</dbReference>
<dbReference type="HAMAP" id="MF_00238">
    <property type="entry name" value="Cytidyl_kinase_type1"/>
    <property type="match status" value="1"/>
</dbReference>
<dbReference type="InterPro" id="IPR003136">
    <property type="entry name" value="Cytidylate_kin"/>
</dbReference>
<dbReference type="InterPro" id="IPR011994">
    <property type="entry name" value="Cytidylate_kinase_dom"/>
</dbReference>
<dbReference type="InterPro" id="IPR027417">
    <property type="entry name" value="P-loop_NTPase"/>
</dbReference>
<dbReference type="NCBIfam" id="TIGR00017">
    <property type="entry name" value="cmk"/>
    <property type="match status" value="1"/>
</dbReference>
<dbReference type="PANTHER" id="PTHR21299:SF2">
    <property type="entry name" value="CYTIDYLATE KINASE"/>
    <property type="match status" value="1"/>
</dbReference>
<dbReference type="PANTHER" id="PTHR21299">
    <property type="entry name" value="CYTIDYLATE KINASE/PANTOATE-BETA-ALANINE LIGASE"/>
    <property type="match status" value="1"/>
</dbReference>
<dbReference type="Pfam" id="PF02224">
    <property type="entry name" value="Cytidylate_kin"/>
    <property type="match status" value="1"/>
</dbReference>
<dbReference type="SUPFAM" id="SSF52540">
    <property type="entry name" value="P-loop containing nucleoside triphosphate hydrolases"/>
    <property type="match status" value="1"/>
</dbReference>
<keyword id="KW-0067">ATP-binding</keyword>
<keyword id="KW-0963">Cytoplasm</keyword>
<keyword id="KW-0418">Kinase</keyword>
<keyword id="KW-0547">Nucleotide-binding</keyword>
<keyword id="KW-0808">Transferase</keyword>
<reference key="1">
    <citation type="journal article" date="2005" name="Nucleic Acids Res.">
        <title>The genome sequence of Salmonella enterica serovar Choleraesuis, a highly invasive and resistant zoonotic pathogen.</title>
        <authorList>
            <person name="Chiu C.-H."/>
            <person name="Tang P."/>
            <person name="Chu C."/>
            <person name="Hu S."/>
            <person name="Bao Q."/>
            <person name="Yu J."/>
            <person name="Chou Y.-Y."/>
            <person name="Wang H.-S."/>
            <person name="Lee Y.-S."/>
        </authorList>
    </citation>
    <scope>NUCLEOTIDE SEQUENCE [LARGE SCALE GENOMIC DNA]</scope>
    <source>
        <strain>SC-B67</strain>
    </source>
</reference>
<protein>
    <recommendedName>
        <fullName evidence="1">Cytidylate kinase</fullName>
        <shortName evidence="1">CK</shortName>
        <ecNumber evidence="1">2.7.4.25</ecNumber>
    </recommendedName>
    <alternativeName>
        <fullName evidence="1">Cytidine monophosphate kinase</fullName>
        <shortName evidence="1">CMP kinase</shortName>
    </alternativeName>
</protein>
<feature type="chain" id="PRO_1000048268" description="Cytidylate kinase">
    <location>
        <begin position="1"/>
        <end position="227"/>
    </location>
</feature>
<feature type="binding site" evidence="1">
    <location>
        <begin position="12"/>
        <end position="20"/>
    </location>
    <ligand>
        <name>ATP</name>
        <dbReference type="ChEBI" id="CHEBI:30616"/>
    </ligand>
</feature>
<name>KCY_SALCH</name>
<comment type="catalytic activity">
    <reaction evidence="1">
        <text>CMP + ATP = CDP + ADP</text>
        <dbReference type="Rhea" id="RHEA:11600"/>
        <dbReference type="ChEBI" id="CHEBI:30616"/>
        <dbReference type="ChEBI" id="CHEBI:58069"/>
        <dbReference type="ChEBI" id="CHEBI:60377"/>
        <dbReference type="ChEBI" id="CHEBI:456216"/>
        <dbReference type="EC" id="2.7.4.25"/>
    </reaction>
</comment>
<comment type="catalytic activity">
    <reaction evidence="1">
        <text>dCMP + ATP = dCDP + ADP</text>
        <dbReference type="Rhea" id="RHEA:25094"/>
        <dbReference type="ChEBI" id="CHEBI:30616"/>
        <dbReference type="ChEBI" id="CHEBI:57566"/>
        <dbReference type="ChEBI" id="CHEBI:58593"/>
        <dbReference type="ChEBI" id="CHEBI:456216"/>
        <dbReference type="EC" id="2.7.4.25"/>
    </reaction>
</comment>
<comment type="subcellular location">
    <subcellularLocation>
        <location evidence="1">Cytoplasm</location>
    </subcellularLocation>
</comment>
<comment type="similarity">
    <text evidence="1">Belongs to the cytidylate kinase family. Type 1 subfamily.</text>
</comment>
<proteinExistence type="inferred from homology"/>
<sequence>MTAIAPVITIDGPSGAGKGTLCKAMAEALQWHLLDSGAIYRVLALAALHHHVDLASEDALVPLASHLDVRFVSTDGNLEVILEGEDVSGEIRTQEVANAASQVAAFPRVREALLRRQRAFRKAPGLIADGRDMGTVVFPDAPVKIFLDASSEERAHRRMLQLQENGFSVNFERLLAEIKERDDRDRNRAVAPLVPAADALVLDSTRLSIEQVIEKALQYARQKLALA</sequence>
<organism>
    <name type="scientific">Salmonella choleraesuis (strain SC-B67)</name>
    <dbReference type="NCBI Taxonomy" id="321314"/>
    <lineage>
        <taxon>Bacteria</taxon>
        <taxon>Pseudomonadati</taxon>
        <taxon>Pseudomonadota</taxon>
        <taxon>Gammaproteobacteria</taxon>
        <taxon>Enterobacterales</taxon>
        <taxon>Enterobacteriaceae</taxon>
        <taxon>Salmonella</taxon>
    </lineage>
</organism>
<accession>Q57R21</accession>
<gene>
    <name evidence="1" type="primary">cmk</name>
    <name type="ordered locus">SCH_0934</name>
</gene>